<evidence type="ECO:0000255" key="1">
    <source>
        <dbReference type="HAMAP-Rule" id="MF_01077"/>
    </source>
</evidence>
<sequence length="155" mass="18026">MIEKKTVCQIVEEWLEGKDYFLVEVTVSPDDKIVVEIDHAEGVWIEDCVELSRFIESKLNREEEDYELEVGSAGIGQPFKVLQQYYIHIGQEVEVVTRDGRKLAGILKDADEEKFTVGVQKKVKLEGSKRPKLIEEDETFTYEQIKYTKYLISFK</sequence>
<organism>
    <name type="scientific">Bacteroides thetaiotaomicron (strain ATCC 29148 / DSM 2079 / JCM 5827 / CCUG 10774 / NCTC 10582 / VPI-5482 / E50)</name>
    <dbReference type="NCBI Taxonomy" id="226186"/>
    <lineage>
        <taxon>Bacteria</taxon>
        <taxon>Pseudomonadati</taxon>
        <taxon>Bacteroidota</taxon>
        <taxon>Bacteroidia</taxon>
        <taxon>Bacteroidales</taxon>
        <taxon>Bacteroidaceae</taxon>
        <taxon>Bacteroides</taxon>
    </lineage>
</organism>
<reference key="1">
    <citation type="journal article" date="2003" name="Science">
        <title>A genomic view of the human-Bacteroides thetaiotaomicron symbiosis.</title>
        <authorList>
            <person name="Xu J."/>
            <person name="Bjursell M.K."/>
            <person name="Himrod J."/>
            <person name="Deng S."/>
            <person name="Carmichael L.K."/>
            <person name="Chiang H.C."/>
            <person name="Hooper L.V."/>
            <person name="Gordon J.I."/>
        </authorList>
    </citation>
    <scope>NUCLEOTIDE SEQUENCE [LARGE SCALE GENOMIC DNA]</scope>
    <source>
        <strain>ATCC 29148 / DSM 2079 / JCM 5827 / CCUG 10774 / NCTC 10582 / VPI-5482 / E50</strain>
    </source>
</reference>
<protein>
    <recommendedName>
        <fullName evidence="1">Ribosome maturation factor RimP</fullName>
    </recommendedName>
</protein>
<dbReference type="EMBL" id="AE015928">
    <property type="protein sequence ID" value="AAO78508.1"/>
    <property type="molecule type" value="Genomic_DNA"/>
</dbReference>
<dbReference type="RefSeq" id="NP_812314.1">
    <property type="nucleotide sequence ID" value="NC_004663.1"/>
</dbReference>
<dbReference type="RefSeq" id="WP_008767604.1">
    <property type="nucleotide sequence ID" value="NC_004663.1"/>
</dbReference>
<dbReference type="SMR" id="Q8A2A3"/>
<dbReference type="FunCoup" id="Q8A2A3">
    <property type="interactions" value="292"/>
</dbReference>
<dbReference type="STRING" id="226186.BT_3402"/>
<dbReference type="PaxDb" id="226186-BT_3402"/>
<dbReference type="EnsemblBacteria" id="AAO78508">
    <property type="protein sequence ID" value="AAO78508"/>
    <property type="gene ID" value="BT_3402"/>
</dbReference>
<dbReference type="GeneID" id="60924581"/>
<dbReference type="KEGG" id="bth:BT_3402"/>
<dbReference type="PATRIC" id="fig|226186.12.peg.3470"/>
<dbReference type="eggNOG" id="COG0779">
    <property type="taxonomic scope" value="Bacteria"/>
</dbReference>
<dbReference type="HOGENOM" id="CLU_070525_3_1_10"/>
<dbReference type="InParanoid" id="Q8A2A3"/>
<dbReference type="OrthoDB" id="9789702at2"/>
<dbReference type="Proteomes" id="UP000001414">
    <property type="component" value="Chromosome"/>
</dbReference>
<dbReference type="GO" id="GO:0005829">
    <property type="term" value="C:cytosol"/>
    <property type="evidence" value="ECO:0000318"/>
    <property type="project" value="GO_Central"/>
</dbReference>
<dbReference type="GO" id="GO:0000028">
    <property type="term" value="P:ribosomal small subunit assembly"/>
    <property type="evidence" value="ECO:0000318"/>
    <property type="project" value="GO_Central"/>
</dbReference>
<dbReference type="GO" id="GO:0006412">
    <property type="term" value="P:translation"/>
    <property type="evidence" value="ECO:0000318"/>
    <property type="project" value="GO_Central"/>
</dbReference>
<dbReference type="FunFam" id="3.30.300.70:FF:000004">
    <property type="entry name" value="Ribosome maturation factor RimP"/>
    <property type="match status" value="1"/>
</dbReference>
<dbReference type="Gene3D" id="3.30.300.70">
    <property type="entry name" value="RimP-like superfamily, N-terminal"/>
    <property type="match status" value="1"/>
</dbReference>
<dbReference type="HAMAP" id="MF_01077">
    <property type="entry name" value="RimP"/>
    <property type="match status" value="1"/>
</dbReference>
<dbReference type="InterPro" id="IPR003728">
    <property type="entry name" value="Ribosome_maturation_RimP"/>
</dbReference>
<dbReference type="InterPro" id="IPR028998">
    <property type="entry name" value="RimP_C"/>
</dbReference>
<dbReference type="InterPro" id="IPR028989">
    <property type="entry name" value="RimP_N"/>
</dbReference>
<dbReference type="InterPro" id="IPR035956">
    <property type="entry name" value="RimP_N_sf"/>
</dbReference>
<dbReference type="NCBIfam" id="NF002531">
    <property type="entry name" value="PRK02001.1"/>
    <property type="match status" value="1"/>
</dbReference>
<dbReference type="PANTHER" id="PTHR33867">
    <property type="entry name" value="RIBOSOME MATURATION FACTOR RIMP"/>
    <property type="match status" value="1"/>
</dbReference>
<dbReference type="PANTHER" id="PTHR33867:SF1">
    <property type="entry name" value="RIBOSOME MATURATION FACTOR RIMP"/>
    <property type="match status" value="1"/>
</dbReference>
<dbReference type="Pfam" id="PF17384">
    <property type="entry name" value="DUF150_C"/>
    <property type="match status" value="1"/>
</dbReference>
<dbReference type="Pfam" id="PF02576">
    <property type="entry name" value="RimP_N"/>
    <property type="match status" value="1"/>
</dbReference>
<dbReference type="SUPFAM" id="SSF75420">
    <property type="entry name" value="YhbC-like, N-terminal domain"/>
    <property type="match status" value="1"/>
</dbReference>
<comment type="function">
    <text evidence="1">Required for maturation of 30S ribosomal subunits.</text>
</comment>
<comment type="subcellular location">
    <subcellularLocation>
        <location evidence="1">Cytoplasm</location>
    </subcellularLocation>
</comment>
<comment type="similarity">
    <text evidence="1">Belongs to the RimP family.</text>
</comment>
<name>RIMP_BACTN</name>
<accession>Q8A2A3</accession>
<gene>
    <name evidence="1" type="primary">rimP</name>
    <name type="ordered locus">BT_3402</name>
</gene>
<proteinExistence type="inferred from homology"/>
<feature type="chain" id="PRO_0000181845" description="Ribosome maturation factor RimP">
    <location>
        <begin position="1"/>
        <end position="155"/>
    </location>
</feature>
<keyword id="KW-0963">Cytoplasm</keyword>
<keyword id="KW-1185">Reference proteome</keyword>
<keyword id="KW-0690">Ribosome biogenesis</keyword>